<dbReference type="EMBL" id="CR382123">
    <property type="protein sequence ID" value="CAH01747.1"/>
    <property type="molecule type" value="Genomic_DNA"/>
</dbReference>
<dbReference type="RefSeq" id="XP_452896.1">
    <property type="nucleotide sequence ID" value="XM_452896.1"/>
</dbReference>
<dbReference type="SMR" id="Q6CT43"/>
<dbReference type="FunCoup" id="Q6CT43">
    <property type="interactions" value="290"/>
</dbReference>
<dbReference type="STRING" id="284590.Q6CT43"/>
<dbReference type="PaxDb" id="284590-Q6CT43"/>
<dbReference type="KEGG" id="kla:KLLA0_C15565g"/>
<dbReference type="eggNOG" id="ENOG502S2IS">
    <property type="taxonomic scope" value="Eukaryota"/>
</dbReference>
<dbReference type="HOGENOM" id="CLU_1372424_0_0_1"/>
<dbReference type="InParanoid" id="Q6CT43"/>
<dbReference type="OMA" id="PKAYLHQ"/>
<dbReference type="Proteomes" id="UP000000598">
    <property type="component" value="Chromosome C"/>
</dbReference>
<dbReference type="GO" id="GO:0030686">
    <property type="term" value="C:90S preribosome"/>
    <property type="evidence" value="ECO:0007669"/>
    <property type="project" value="InterPro"/>
</dbReference>
<dbReference type="GO" id="GO:0005730">
    <property type="term" value="C:nucleolus"/>
    <property type="evidence" value="ECO:0007669"/>
    <property type="project" value="UniProtKB-SubCell"/>
</dbReference>
<dbReference type="GO" id="GO:0030688">
    <property type="term" value="C:preribosome, small subunit precursor"/>
    <property type="evidence" value="ECO:0007669"/>
    <property type="project" value="InterPro"/>
</dbReference>
<dbReference type="GO" id="GO:0000462">
    <property type="term" value="P:maturation of SSU-rRNA from tricistronic rRNA transcript (SSU-rRNA, 5.8S rRNA, LSU-rRNA)"/>
    <property type="evidence" value="ECO:0007669"/>
    <property type="project" value="InterPro"/>
</dbReference>
<dbReference type="InterPro" id="IPR028160">
    <property type="entry name" value="Slx9-like"/>
</dbReference>
<dbReference type="Pfam" id="PF15341">
    <property type="entry name" value="SLX9"/>
    <property type="match status" value="1"/>
</dbReference>
<accession>Q6CT43</accession>
<feature type="chain" id="PRO_0000333450" description="Ribosome biogenesis protein SLX9">
    <location>
        <begin position="1"/>
        <end position="198"/>
    </location>
</feature>
<feature type="region of interest" description="Disordered" evidence="2">
    <location>
        <begin position="28"/>
        <end position="49"/>
    </location>
</feature>
<feature type="region of interest" description="Disordered" evidence="2">
    <location>
        <begin position="137"/>
        <end position="163"/>
    </location>
</feature>
<name>SLX9_KLULA</name>
<evidence type="ECO:0000250" key="1"/>
<evidence type="ECO:0000256" key="2">
    <source>
        <dbReference type="SAM" id="MobiDB-lite"/>
    </source>
</evidence>
<evidence type="ECO:0000305" key="3"/>
<reference key="1">
    <citation type="journal article" date="2004" name="Nature">
        <title>Genome evolution in yeasts.</title>
        <authorList>
            <person name="Dujon B."/>
            <person name="Sherman D."/>
            <person name="Fischer G."/>
            <person name="Durrens P."/>
            <person name="Casaregola S."/>
            <person name="Lafontaine I."/>
            <person name="de Montigny J."/>
            <person name="Marck C."/>
            <person name="Neuveglise C."/>
            <person name="Talla E."/>
            <person name="Goffard N."/>
            <person name="Frangeul L."/>
            <person name="Aigle M."/>
            <person name="Anthouard V."/>
            <person name="Babour A."/>
            <person name="Barbe V."/>
            <person name="Barnay S."/>
            <person name="Blanchin S."/>
            <person name="Beckerich J.-M."/>
            <person name="Beyne E."/>
            <person name="Bleykasten C."/>
            <person name="Boisrame A."/>
            <person name="Boyer J."/>
            <person name="Cattolico L."/>
            <person name="Confanioleri F."/>
            <person name="de Daruvar A."/>
            <person name="Despons L."/>
            <person name="Fabre E."/>
            <person name="Fairhead C."/>
            <person name="Ferry-Dumazet H."/>
            <person name="Groppi A."/>
            <person name="Hantraye F."/>
            <person name="Hennequin C."/>
            <person name="Jauniaux N."/>
            <person name="Joyet P."/>
            <person name="Kachouri R."/>
            <person name="Kerrest A."/>
            <person name="Koszul R."/>
            <person name="Lemaire M."/>
            <person name="Lesur I."/>
            <person name="Ma L."/>
            <person name="Muller H."/>
            <person name="Nicaud J.-M."/>
            <person name="Nikolski M."/>
            <person name="Oztas S."/>
            <person name="Ozier-Kalogeropoulos O."/>
            <person name="Pellenz S."/>
            <person name="Potier S."/>
            <person name="Richard G.-F."/>
            <person name="Straub M.-L."/>
            <person name="Suleau A."/>
            <person name="Swennen D."/>
            <person name="Tekaia F."/>
            <person name="Wesolowski-Louvel M."/>
            <person name="Westhof E."/>
            <person name="Wirth B."/>
            <person name="Zeniou-Meyer M."/>
            <person name="Zivanovic Y."/>
            <person name="Bolotin-Fukuhara M."/>
            <person name="Thierry A."/>
            <person name="Bouchier C."/>
            <person name="Caudron B."/>
            <person name="Scarpelli C."/>
            <person name="Gaillardin C."/>
            <person name="Weissenbach J."/>
            <person name="Wincker P."/>
            <person name="Souciet J.-L."/>
        </authorList>
    </citation>
    <scope>NUCLEOTIDE SEQUENCE [LARGE SCALE GENOMIC DNA]</scope>
    <source>
        <strain>ATCC 8585 / CBS 2359 / DSM 70799 / NBRC 1267 / NRRL Y-1140 / WM37</strain>
    </source>
</reference>
<proteinExistence type="inferred from homology"/>
<sequence>MVAKKRTALRTKAAKVTTVEKDHAVQPLTELPPDPKAFLHQPRETKKEKLQNKSQNFISRITDVGKNLTGISKSSVRRRKRKLRDELKPKMDDLLISLQQEGVIRNDEPSQEDLAVEKKASLNSSVTKVITSDAYGSIRGSAPQHKGQLRKNEPNIRNQRGAKALAQQESKRFNEVLLNETFQKNPFDALKEAIRMRQ</sequence>
<keyword id="KW-0539">Nucleus</keyword>
<keyword id="KW-1185">Reference proteome</keyword>
<keyword id="KW-0690">Ribosome biogenesis</keyword>
<keyword id="KW-0698">rRNA processing</keyword>
<comment type="function">
    <text evidence="1">Involved in ribosome biogenesis. Required for normal pre-rRNA processing in internal transcribed spacer 1 (ITS1). May be involved in the movements of the replication forks (By similarity).</text>
</comment>
<comment type="subunit">
    <text evidence="1">Interacts with the 35S, 23S and 20S pre-rRNAs and with the U3 snoRNA.</text>
</comment>
<comment type="subcellular location">
    <subcellularLocation>
        <location evidence="1">Nucleus</location>
        <location evidence="1">Nucleolus</location>
    </subcellularLocation>
</comment>
<comment type="similarity">
    <text evidence="3">Belongs to the SLX9 family.</text>
</comment>
<gene>
    <name type="primary">SLX9</name>
    <name type="ordered locus">KLLA0C15565g</name>
</gene>
<protein>
    <recommendedName>
        <fullName>Ribosome biogenesis protein SLX9</fullName>
    </recommendedName>
</protein>
<organism>
    <name type="scientific">Kluyveromyces lactis (strain ATCC 8585 / CBS 2359 / DSM 70799 / NBRC 1267 / NRRL Y-1140 / WM37)</name>
    <name type="common">Yeast</name>
    <name type="synonym">Candida sphaerica</name>
    <dbReference type="NCBI Taxonomy" id="284590"/>
    <lineage>
        <taxon>Eukaryota</taxon>
        <taxon>Fungi</taxon>
        <taxon>Dikarya</taxon>
        <taxon>Ascomycota</taxon>
        <taxon>Saccharomycotina</taxon>
        <taxon>Saccharomycetes</taxon>
        <taxon>Saccharomycetales</taxon>
        <taxon>Saccharomycetaceae</taxon>
        <taxon>Kluyveromyces</taxon>
    </lineage>
</organism>